<accession>A3VVZ4</accession>
<dbReference type="EC" id="1.14.13.148" evidence="2"/>
<dbReference type="EMBL" id="AAMV01000001">
    <property type="protein sequence ID" value="EAQ26624.1"/>
    <property type="molecule type" value="Genomic_DNA"/>
</dbReference>
<dbReference type="RefSeq" id="WP_009818593.1">
    <property type="nucleotide sequence ID" value="NZ_CH902584.1"/>
</dbReference>
<dbReference type="SMR" id="A3VVZ4"/>
<dbReference type="STRING" id="314264.ROS217_18897"/>
<dbReference type="eggNOG" id="COG2072">
    <property type="taxonomic scope" value="Bacteria"/>
</dbReference>
<dbReference type="HOGENOM" id="CLU_006909_3_0_5"/>
<dbReference type="OrthoDB" id="9790219at2"/>
<dbReference type="Proteomes" id="UP000004087">
    <property type="component" value="Unassembled WGS sequence"/>
</dbReference>
<dbReference type="GO" id="GO:0050660">
    <property type="term" value="F:flavin adenine dinucleotide binding"/>
    <property type="evidence" value="ECO:0007669"/>
    <property type="project" value="InterPro"/>
</dbReference>
<dbReference type="GO" id="GO:0004499">
    <property type="term" value="F:N,N-dimethylaniline monooxygenase activity"/>
    <property type="evidence" value="ECO:0007669"/>
    <property type="project" value="InterPro"/>
</dbReference>
<dbReference type="GO" id="GO:0050661">
    <property type="term" value="F:NADP binding"/>
    <property type="evidence" value="ECO:0007669"/>
    <property type="project" value="InterPro"/>
</dbReference>
<dbReference type="FunFam" id="3.50.50.60:FF:000138">
    <property type="entry name" value="Flavin-containing monooxygenase"/>
    <property type="match status" value="1"/>
</dbReference>
<dbReference type="Gene3D" id="3.50.50.60">
    <property type="entry name" value="FAD/NAD(P)-binding domain"/>
    <property type="match status" value="2"/>
</dbReference>
<dbReference type="InterPro" id="IPR036188">
    <property type="entry name" value="FAD/NAD-bd_sf"/>
</dbReference>
<dbReference type="InterPro" id="IPR000960">
    <property type="entry name" value="Flavin_mOase"/>
</dbReference>
<dbReference type="InterPro" id="IPR020946">
    <property type="entry name" value="Flavin_mOase-like"/>
</dbReference>
<dbReference type="InterPro" id="IPR050346">
    <property type="entry name" value="FMO-like"/>
</dbReference>
<dbReference type="PANTHER" id="PTHR23023">
    <property type="entry name" value="DIMETHYLANILINE MONOOXYGENASE"/>
    <property type="match status" value="1"/>
</dbReference>
<dbReference type="Pfam" id="PF00743">
    <property type="entry name" value="FMO-like"/>
    <property type="match status" value="2"/>
</dbReference>
<dbReference type="PIRSF" id="PIRSF000332">
    <property type="entry name" value="FMO"/>
    <property type="match status" value="1"/>
</dbReference>
<dbReference type="PRINTS" id="PR00370">
    <property type="entry name" value="FMOXYGENASE"/>
</dbReference>
<dbReference type="SUPFAM" id="SSF51905">
    <property type="entry name" value="FAD/NAD(P)-binding domain"/>
    <property type="match status" value="2"/>
</dbReference>
<evidence type="ECO:0000250" key="1">
    <source>
        <dbReference type="UniProtKB" id="A3SLM3"/>
    </source>
</evidence>
<evidence type="ECO:0000269" key="2">
    <source>
    </source>
</evidence>
<evidence type="ECO:0000303" key="3">
    <source>
    </source>
</evidence>
<evidence type="ECO:0000305" key="4"/>
<evidence type="ECO:0000312" key="5">
    <source>
        <dbReference type="EMBL" id="EAQ26624.1"/>
    </source>
</evidence>
<organism>
    <name type="scientific">Roseovarius sp. (strain 217)</name>
    <dbReference type="NCBI Taxonomy" id="314264"/>
    <lineage>
        <taxon>Bacteria</taxon>
        <taxon>Pseudomonadati</taxon>
        <taxon>Pseudomonadota</taxon>
        <taxon>Alphaproteobacteria</taxon>
        <taxon>Rhodobacterales</taxon>
        <taxon>Roseobacteraceae</taxon>
        <taxon>Roseovarius</taxon>
    </lineage>
</organism>
<protein>
    <recommendedName>
        <fullName evidence="3">Trimethylamine monooxygenase</fullName>
        <shortName evidence="3">TMA monooxygenase</shortName>
        <shortName evidence="3">Tmm</shortName>
        <ecNumber evidence="2">1.14.13.148</ecNumber>
    </recommendedName>
</protein>
<comment type="function">
    <text evidence="2">Catalyzes the oxidation of trimethylamine (TMA) to produce trimethylamine N-oxide (TMAO) (PubMed:22006322). In vitro, has a broad substrate specificity, oxidizing many nitrogen- and sulfur-containing compounds, including dimethylamine (DMA), dimethylsulfide (DMS) and dimethylsulfoxide (DMSO) (PubMed:22006322).</text>
</comment>
<comment type="catalytic activity">
    <reaction evidence="2">
        <text>trimethylamine + NADPH + O2 = trimethylamine N-oxide + NADP(+) + H2O</text>
        <dbReference type="Rhea" id="RHEA:31979"/>
        <dbReference type="ChEBI" id="CHEBI:15377"/>
        <dbReference type="ChEBI" id="CHEBI:15379"/>
        <dbReference type="ChEBI" id="CHEBI:15724"/>
        <dbReference type="ChEBI" id="CHEBI:57783"/>
        <dbReference type="ChEBI" id="CHEBI:58349"/>
        <dbReference type="ChEBI" id="CHEBI:58389"/>
        <dbReference type="EC" id="1.14.13.148"/>
    </reaction>
</comment>
<comment type="cofactor">
    <cofactor evidence="1">
        <name>FAD</name>
        <dbReference type="ChEBI" id="CHEBI:57692"/>
    </cofactor>
</comment>
<comment type="biophysicochemical properties">
    <kinetics>
        <KM evidence="2">21.6 uM for TMA</KM>
        <KM evidence="2">864.2 uM for DMA</KM>
        <KM evidence="2">25.7 uM for DMS</KM>
        <KM evidence="2">16340.8 uM for DMSO</KM>
        <Vmax evidence="2">1133.6 nmol/min/mg enzyme with TMA as substrate</Vmax>
        <Vmax evidence="2">358.0 nmol/min/mg enzyme with DMA as substrate</Vmax>
        <Vmax evidence="2">577.4 nmol/min/mg enzyme with DMS as substrate</Vmax>
        <Vmax evidence="2">179.4 nmol/min/mg enzyme with DMSO as substrate</Vmax>
    </kinetics>
</comment>
<comment type="similarity">
    <text evidence="4">Belongs to the FMO family.</text>
</comment>
<feature type="chain" id="PRO_0000458080" description="Trimethylamine monooxygenase">
    <location>
        <begin position="1"/>
        <end position="445"/>
    </location>
</feature>
<feature type="binding site" evidence="1">
    <location>
        <position position="14"/>
    </location>
    <ligand>
        <name>FAD</name>
        <dbReference type="ChEBI" id="CHEBI:57692"/>
    </ligand>
</feature>
<feature type="binding site" evidence="1">
    <location>
        <position position="39"/>
    </location>
    <ligand>
        <name>FAD</name>
        <dbReference type="ChEBI" id="CHEBI:57692"/>
    </ligand>
</feature>
<feature type="binding site" evidence="1">
    <location>
        <position position="41"/>
    </location>
    <ligand>
        <name>FAD</name>
        <dbReference type="ChEBI" id="CHEBI:57692"/>
    </ligand>
</feature>
<feature type="binding site" evidence="1">
    <location>
        <position position="47"/>
    </location>
    <ligand>
        <name>FAD</name>
        <dbReference type="ChEBI" id="CHEBI:57692"/>
    </ligand>
</feature>
<feature type="binding site" evidence="1">
    <location>
        <position position="48"/>
    </location>
    <ligand>
        <name>FAD</name>
        <dbReference type="ChEBI" id="CHEBI:57692"/>
    </ligand>
</feature>
<feature type="binding site" evidence="1">
    <location>
        <position position="64"/>
    </location>
    <ligand>
        <name>FAD</name>
        <dbReference type="ChEBI" id="CHEBI:57692"/>
    </ligand>
</feature>
<feature type="binding site" evidence="1">
    <location>
        <position position="72"/>
    </location>
    <ligand>
        <name>NADP(+)</name>
        <dbReference type="ChEBI" id="CHEBI:58349"/>
    </ligand>
</feature>
<feature type="binding site" evidence="1">
    <location>
        <position position="74"/>
    </location>
    <ligand>
        <name>FAD</name>
        <dbReference type="ChEBI" id="CHEBI:57692"/>
    </ligand>
</feature>
<feature type="binding site" evidence="1">
    <location>
        <position position="74"/>
    </location>
    <ligand>
        <name>NADP(+)</name>
        <dbReference type="ChEBI" id="CHEBI:58349"/>
    </ligand>
</feature>
<feature type="binding site" evidence="1">
    <location>
        <position position="127"/>
    </location>
    <ligand>
        <name>FAD</name>
        <dbReference type="ChEBI" id="CHEBI:57692"/>
    </ligand>
</feature>
<feature type="binding site" evidence="1">
    <location>
        <position position="204"/>
    </location>
    <ligand>
        <name>NADP(+)</name>
        <dbReference type="ChEBI" id="CHEBI:58349"/>
    </ligand>
</feature>
<feature type="binding site" evidence="1">
    <location>
        <position position="205"/>
    </location>
    <ligand>
        <name>NADP(+)</name>
        <dbReference type="ChEBI" id="CHEBI:58349"/>
    </ligand>
</feature>
<feature type="binding site" evidence="1">
    <location>
        <position position="207"/>
    </location>
    <ligand>
        <name>NADP(+)</name>
        <dbReference type="ChEBI" id="CHEBI:58349"/>
    </ligand>
</feature>
<feature type="binding site" evidence="1">
    <location>
        <position position="228"/>
    </location>
    <ligand>
        <name>NADP(+)</name>
        <dbReference type="ChEBI" id="CHEBI:58349"/>
    </ligand>
</feature>
<feature type="binding site" evidence="1">
    <location>
        <position position="317"/>
    </location>
    <ligand>
        <name>FAD</name>
        <dbReference type="ChEBI" id="CHEBI:57692"/>
    </ligand>
</feature>
<feature type="binding site" evidence="1">
    <location>
        <position position="320"/>
    </location>
    <ligand>
        <name>FAD</name>
        <dbReference type="ChEBI" id="CHEBI:57692"/>
    </ligand>
</feature>
<feature type="binding site" evidence="1">
    <location>
        <position position="411"/>
    </location>
    <ligand>
        <name>NADP(+)</name>
        <dbReference type="ChEBI" id="CHEBI:58349"/>
    </ligand>
</feature>
<sequence length="445" mass="50869">MTKKRIAIIGAGPSGLAQLRAFQSAAAKGAEIPEIVCFEKQDNWGGLWNYTWRTGLDQYGEPVHGSMYRYLWSNGPKEGLEFADYSFEEHFGKQIASYPPRAVLFDYIEGRVLKAGVRNLIRFSTAVRWVEKAGDKFNVTVCHLPEDRTYTEEFDHVIVCSGHFSTPNVPYFPGFENFKGRVLHAHDFRDALEFKDKDILIVGTSYSAEDIGSQCWKYGCKSVTVSHRTAPMGFNWPDNWQEVPLLQKVEGNTAYFKDGTTKDVDAVILCTGYKHHFPFLPDDLRLKTANRLATADLYKGVAFVREPALFYLGMQDQWFTFNMFDAQAWWVRDVIMGRIALPDQATMEADVIDRVTREDAGEDDYAAIWYQGDYVKELIDETDYPSFDVEGACKAFKEWKGHKKKDIMGFRNNAYKSVITGTMAPMHHTPWKDALDDSLEVYLQN</sequence>
<reference key="1">
    <citation type="submission" date="2006-01" db="EMBL/GenBank/DDBJ databases">
        <authorList>
            <person name="Murrell J.C."/>
            <person name="Schafer H."/>
            <person name="Ferriera S."/>
            <person name="Johnson J."/>
            <person name="Kravitz S."/>
            <person name="Halpern A."/>
            <person name="Remington K."/>
            <person name="Beeson K."/>
            <person name="Tran B."/>
            <person name="Rogers Y.-H."/>
            <person name="Friedman R."/>
            <person name="Venter J.C."/>
        </authorList>
    </citation>
    <scope>NUCLEOTIDE SEQUENCE [LARGE SCALE GENOMIC DNA]</scope>
    <source>
        <strain>217</strain>
    </source>
</reference>
<reference key="2">
    <citation type="journal article" date="2011" name="Proc. Natl. Acad. Sci. U.S.A.">
        <title>Bacterial flavin-containing monooxygenase is trimethylamine monooxygenase.</title>
        <authorList>
            <person name="Chen Y."/>
            <person name="Patel N.A."/>
            <person name="Crombie A."/>
            <person name="Scrivens J.H."/>
            <person name="Murrell J.C."/>
        </authorList>
    </citation>
    <scope>FUNCTION</scope>
    <scope>CATALYTIC ACTIVITY</scope>
    <scope>BIOPHYSICOCHEMICAL PROPERTIES</scope>
    <source>
        <strain>217</strain>
    </source>
</reference>
<gene>
    <name evidence="3" type="primary">tmm</name>
    <name evidence="5" type="ORF">ROS217_18897</name>
</gene>
<proteinExistence type="evidence at protein level"/>
<keyword id="KW-0274">FAD</keyword>
<keyword id="KW-0285">Flavoprotein</keyword>
<keyword id="KW-0503">Monooxygenase</keyword>
<keyword id="KW-0521">NADP</keyword>
<keyword id="KW-0560">Oxidoreductase</keyword>
<name>TMM_ROSS2</name>